<reference key="1">
    <citation type="journal article" date="1999" name="DNA Res.">
        <title>Complete genome sequence of an aerobic hyper-thermophilic crenarchaeon, Aeropyrum pernix K1.</title>
        <authorList>
            <person name="Kawarabayasi Y."/>
            <person name="Hino Y."/>
            <person name="Horikawa H."/>
            <person name="Yamazaki S."/>
            <person name="Haikawa Y."/>
            <person name="Jin-no K."/>
            <person name="Takahashi M."/>
            <person name="Sekine M."/>
            <person name="Baba S."/>
            <person name="Ankai A."/>
            <person name="Kosugi H."/>
            <person name="Hosoyama A."/>
            <person name="Fukui S."/>
            <person name="Nagai Y."/>
            <person name="Nishijima K."/>
            <person name="Nakazawa H."/>
            <person name="Takamiya M."/>
            <person name="Masuda S."/>
            <person name="Funahashi T."/>
            <person name="Tanaka T."/>
            <person name="Kudoh Y."/>
            <person name="Yamazaki J."/>
            <person name="Kushida N."/>
            <person name="Oguchi A."/>
            <person name="Aoki K."/>
            <person name="Kubota K."/>
            <person name="Nakamura Y."/>
            <person name="Nomura N."/>
            <person name="Sako Y."/>
            <person name="Kikuchi H."/>
        </authorList>
    </citation>
    <scope>NUCLEOTIDE SEQUENCE [LARGE SCALE GENOMIC DNA]</scope>
    <source>
        <strain>ATCC 700893 / DSM 11879 / JCM 9820 / NBRC 100138 / K1</strain>
    </source>
</reference>
<dbReference type="EC" id="2.5.1.19" evidence="1"/>
<dbReference type="EMBL" id="BA000002">
    <property type="protein sequence ID" value="BAA79537.1"/>
    <property type="molecule type" value="Genomic_DNA"/>
</dbReference>
<dbReference type="PIR" id="A72642">
    <property type="entry name" value="A72642"/>
</dbReference>
<dbReference type="SMR" id="Q9YEK9"/>
<dbReference type="STRING" id="272557.APE_0569"/>
<dbReference type="EnsemblBacteria" id="BAA79537">
    <property type="protein sequence ID" value="BAA79537"/>
    <property type="gene ID" value="APE_0569"/>
</dbReference>
<dbReference type="KEGG" id="ape:APE_0569"/>
<dbReference type="PATRIC" id="fig|272557.25.peg.424"/>
<dbReference type="eggNOG" id="arCOG04134">
    <property type="taxonomic scope" value="Archaea"/>
</dbReference>
<dbReference type="UniPathway" id="UPA00053"/>
<dbReference type="Proteomes" id="UP000002518">
    <property type="component" value="Chromosome"/>
</dbReference>
<dbReference type="GO" id="GO:0005737">
    <property type="term" value="C:cytoplasm"/>
    <property type="evidence" value="ECO:0007669"/>
    <property type="project" value="UniProtKB-SubCell"/>
</dbReference>
<dbReference type="GO" id="GO:0003866">
    <property type="term" value="F:3-phosphoshikimate 1-carboxyvinyltransferase activity"/>
    <property type="evidence" value="ECO:0007669"/>
    <property type="project" value="UniProtKB-UniRule"/>
</dbReference>
<dbReference type="GO" id="GO:0008652">
    <property type="term" value="P:amino acid biosynthetic process"/>
    <property type="evidence" value="ECO:0007669"/>
    <property type="project" value="UniProtKB-KW"/>
</dbReference>
<dbReference type="GO" id="GO:0009073">
    <property type="term" value="P:aromatic amino acid family biosynthetic process"/>
    <property type="evidence" value="ECO:0007669"/>
    <property type="project" value="UniProtKB-KW"/>
</dbReference>
<dbReference type="GO" id="GO:0009423">
    <property type="term" value="P:chorismate biosynthetic process"/>
    <property type="evidence" value="ECO:0007669"/>
    <property type="project" value="UniProtKB-UniRule"/>
</dbReference>
<dbReference type="CDD" id="cd01556">
    <property type="entry name" value="EPSP_synthase"/>
    <property type="match status" value="1"/>
</dbReference>
<dbReference type="Gene3D" id="3.65.10.10">
    <property type="entry name" value="Enolpyruvate transferase domain"/>
    <property type="match status" value="2"/>
</dbReference>
<dbReference type="HAMAP" id="MF_00210">
    <property type="entry name" value="EPSP_synth"/>
    <property type="match status" value="1"/>
</dbReference>
<dbReference type="InterPro" id="IPR001986">
    <property type="entry name" value="Enolpyruvate_Tfrase_dom"/>
</dbReference>
<dbReference type="InterPro" id="IPR036968">
    <property type="entry name" value="Enolpyruvate_Tfrase_sf"/>
</dbReference>
<dbReference type="InterPro" id="IPR006264">
    <property type="entry name" value="EPSP_synthase"/>
</dbReference>
<dbReference type="InterPro" id="IPR023193">
    <property type="entry name" value="EPSP_synthase_CS"/>
</dbReference>
<dbReference type="InterPro" id="IPR013792">
    <property type="entry name" value="RNA3'P_cycl/enolpyr_Trfase_a/b"/>
</dbReference>
<dbReference type="NCBIfam" id="TIGR01356">
    <property type="entry name" value="aroA"/>
    <property type="match status" value="1"/>
</dbReference>
<dbReference type="PANTHER" id="PTHR21090">
    <property type="entry name" value="AROM/DEHYDROQUINATE SYNTHASE"/>
    <property type="match status" value="1"/>
</dbReference>
<dbReference type="PANTHER" id="PTHR21090:SF5">
    <property type="entry name" value="PENTAFUNCTIONAL AROM POLYPEPTIDE"/>
    <property type="match status" value="1"/>
</dbReference>
<dbReference type="Pfam" id="PF00275">
    <property type="entry name" value="EPSP_synthase"/>
    <property type="match status" value="1"/>
</dbReference>
<dbReference type="PIRSF" id="PIRSF000505">
    <property type="entry name" value="EPSPS"/>
    <property type="match status" value="1"/>
</dbReference>
<dbReference type="SUPFAM" id="SSF55205">
    <property type="entry name" value="EPT/RTPC-like"/>
    <property type="match status" value="1"/>
</dbReference>
<dbReference type="PROSITE" id="PS00104">
    <property type="entry name" value="EPSP_SYNTHASE_1"/>
    <property type="match status" value="1"/>
</dbReference>
<dbReference type="PROSITE" id="PS00885">
    <property type="entry name" value="EPSP_SYNTHASE_2"/>
    <property type="match status" value="1"/>
</dbReference>
<proteinExistence type="inferred from homology"/>
<name>AROA_AERPE</name>
<evidence type="ECO:0000255" key="1">
    <source>
        <dbReference type="HAMAP-Rule" id="MF_00210"/>
    </source>
</evidence>
<evidence type="ECO:0000305" key="2"/>
<accession>Q9YEK9</accession>
<sequence length="427" mass="44971">MVWLRAPDRVVVHPSTVEGRVEAPPSKSYTHRMLFLALLARGRSVVRRPLVSNDTLATLNAVALLGGKPRLGRGVAEVEGGEVRGGAVVYAAGSGTTIRIAMGVAAHSAEATLLYGDESLNRRPVHPLSEALRSMGARVCDTGGNPPVKVSGPLRRASVEVDAAISSQFATSLLIAGSRLGEFELSAARLSSRGYVDITLESLSMFGVRVEREGYRLFRLRGTPKPVDAAVPGDYSSASFMLAAGAIAGRVEVEGLRPVDPQPDRRIVELLRSMGARVRVEGGVVAVESTGPLEPVDVDLDGSPDLAPVAAVLAAYARGVSRLRGLERLKYKESDRLSAIAWNLARLGVEARVRGGILEIRGGGVEGGVARSWGDHRIAMAMAVAGLGARRPVAVEGFSRVPDSYPGFLEDLARLGARVEAVKGGGV</sequence>
<feature type="chain" id="PRO_0000088325" description="3-phosphoshikimate 1-carboxyvinyltransferase">
    <location>
        <begin position="1"/>
        <end position="427"/>
    </location>
</feature>
<feature type="active site" description="Proton acceptor" evidence="1">
    <location>
        <position position="305"/>
    </location>
</feature>
<feature type="binding site" evidence="1">
    <location>
        <position position="27"/>
    </location>
    <ligand>
        <name>3-phosphoshikimate</name>
        <dbReference type="ChEBI" id="CHEBI:145989"/>
    </ligand>
</feature>
<feature type="binding site" evidence="1">
    <location>
        <position position="27"/>
    </location>
    <ligand>
        <name>phosphoenolpyruvate</name>
        <dbReference type="ChEBI" id="CHEBI:58702"/>
    </ligand>
</feature>
<feature type="binding site" evidence="1">
    <location>
        <position position="28"/>
    </location>
    <ligand>
        <name>3-phosphoshikimate</name>
        <dbReference type="ChEBI" id="CHEBI:145989"/>
    </ligand>
</feature>
<feature type="binding site" evidence="1">
    <location>
        <position position="32"/>
    </location>
    <ligand>
        <name>3-phosphoshikimate</name>
        <dbReference type="ChEBI" id="CHEBI:145989"/>
    </ligand>
</feature>
<feature type="binding site" evidence="1">
    <location>
        <position position="95"/>
    </location>
    <ligand>
        <name>phosphoenolpyruvate</name>
        <dbReference type="ChEBI" id="CHEBI:58702"/>
    </ligand>
</feature>
<feature type="binding site" evidence="1">
    <location>
        <position position="123"/>
    </location>
    <ligand>
        <name>phosphoenolpyruvate</name>
        <dbReference type="ChEBI" id="CHEBI:58702"/>
    </ligand>
</feature>
<feature type="binding site" evidence="1">
    <location>
        <position position="166"/>
    </location>
    <ligand>
        <name>3-phosphoshikimate</name>
        <dbReference type="ChEBI" id="CHEBI:145989"/>
    </ligand>
</feature>
<feature type="binding site" evidence="1">
    <location>
        <position position="167"/>
    </location>
    <ligand>
        <name>3-phosphoshikimate</name>
        <dbReference type="ChEBI" id="CHEBI:145989"/>
    </ligand>
</feature>
<feature type="binding site" evidence="1">
    <location>
        <position position="168"/>
    </location>
    <ligand>
        <name>3-phosphoshikimate</name>
        <dbReference type="ChEBI" id="CHEBI:145989"/>
    </ligand>
</feature>
<feature type="binding site" evidence="1">
    <location>
        <position position="168"/>
    </location>
    <ligand>
        <name>phosphoenolpyruvate</name>
        <dbReference type="ChEBI" id="CHEBI:58702"/>
    </ligand>
</feature>
<feature type="binding site" evidence="1">
    <location>
        <position position="192"/>
    </location>
    <ligand>
        <name>3-phosphoshikimate</name>
        <dbReference type="ChEBI" id="CHEBI:145989"/>
    </ligand>
</feature>
<feature type="binding site" evidence="1">
    <location>
        <position position="305"/>
    </location>
    <ligand>
        <name>3-phosphoshikimate</name>
        <dbReference type="ChEBI" id="CHEBI:145989"/>
    </ligand>
</feature>
<feature type="binding site" evidence="1">
    <location>
        <position position="332"/>
    </location>
    <ligand>
        <name>3-phosphoshikimate</name>
        <dbReference type="ChEBI" id="CHEBI:145989"/>
    </ligand>
</feature>
<feature type="binding site" evidence="1">
    <location>
        <position position="336"/>
    </location>
    <ligand>
        <name>phosphoenolpyruvate</name>
        <dbReference type="ChEBI" id="CHEBI:58702"/>
    </ligand>
</feature>
<feature type="binding site" evidence="1">
    <location>
        <position position="377"/>
    </location>
    <ligand>
        <name>phosphoenolpyruvate</name>
        <dbReference type="ChEBI" id="CHEBI:58702"/>
    </ligand>
</feature>
<gene>
    <name evidence="1" type="primary">aroA</name>
    <name type="ordered locus">APE_0569</name>
</gene>
<comment type="function">
    <text evidence="1">Catalyzes the transfer of the enolpyruvyl moiety of phosphoenolpyruvate (PEP) to the 5-hydroxyl of shikimate-3-phosphate (S3P) to produce enolpyruvyl shikimate-3-phosphate and inorganic phosphate.</text>
</comment>
<comment type="catalytic activity">
    <reaction evidence="1">
        <text>3-phosphoshikimate + phosphoenolpyruvate = 5-O-(1-carboxyvinyl)-3-phosphoshikimate + phosphate</text>
        <dbReference type="Rhea" id="RHEA:21256"/>
        <dbReference type="ChEBI" id="CHEBI:43474"/>
        <dbReference type="ChEBI" id="CHEBI:57701"/>
        <dbReference type="ChEBI" id="CHEBI:58702"/>
        <dbReference type="ChEBI" id="CHEBI:145989"/>
        <dbReference type="EC" id="2.5.1.19"/>
    </reaction>
    <physiologicalReaction direction="left-to-right" evidence="1">
        <dbReference type="Rhea" id="RHEA:21257"/>
    </physiologicalReaction>
</comment>
<comment type="pathway">
    <text evidence="1">Metabolic intermediate biosynthesis; chorismate biosynthesis.</text>
</comment>
<comment type="subunit">
    <text evidence="1">Monomer.</text>
</comment>
<comment type="subcellular location">
    <subcellularLocation>
        <location evidence="1">Cytoplasm</location>
    </subcellularLocation>
</comment>
<comment type="similarity">
    <text evidence="1 2">Belongs to the EPSP synthase family.</text>
</comment>
<protein>
    <recommendedName>
        <fullName evidence="1">3-phosphoshikimate 1-carboxyvinyltransferase</fullName>
        <ecNumber evidence="1">2.5.1.19</ecNumber>
    </recommendedName>
    <alternativeName>
        <fullName evidence="1">5-enolpyruvylshikimate-3-phosphate synthase</fullName>
        <shortName evidence="1">EPSP synthase</shortName>
        <shortName evidence="1">EPSPS</shortName>
    </alternativeName>
</protein>
<organism>
    <name type="scientific">Aeropyrum pernix (strain ATCC 700893 / DSM 11879 / JCM 9820 / NBRC 100138 / K1)</name>
    <dbReference type="NCBI Taxonomy" id="272557"/>
    <lineage>
        <taxon>Archaea</taxon>
        <taxon>Thermoproteota</taxon>
        <taxon>Thermoprotei</taxon>
        <taxon>Desulfurococcales</taxon>
        <taxon>Desulfurococcaceae</taxon>
        <taxon>Aeropyrum</taxon>
    </lineage>
</organism>
<keyword id="KW-0028">Amino-acid biosynthesis</keyword>
<keyword id="KW-0057">Aromatic amino acid biosynthesis</keyword>
<keyword id="KW-0963">Cytoplasm</keyword>
<keyword id="KW-1185">Reference proteome</keyword>
<keyword id="KW-0808">Transferase</keyword>